<keyword id="KW-0249">Electron transport</keyword>
<keyword id="KW-0349">Heme</keyword>
<keyword id="KW-0408">Iron</keyword>
<keyword id="KW-0472">Membrane</keyword>
<keyword id="KW-0479">Metal-binding</keyword>
<keyword id="KW-0496">Mitochondrion</keyword>
<keyword id="KW-0999">Mitochondrion inner membrane</keyword>
<keyword id="KW-1185">Reference proteome</keyword>
<keyword id="KW-0679">Respiratory chain</keyword>
<keyword id="KW-0812">Transmembrane</keyword>
<keyword id="KW-1133">Transmembrane helix</keyword>
<keyword id="KW-0813">Transport</keyword>
<keyword id="KW-0830">Ubiquinone</keyword>
<comment type="function">
    <text evidence="2">Component of the ubiquinol-cytochrome c reductase complex (complex III or cytochrome b-c1 complex) that is part of the mitochondrial respiratory chain. The b-c1 complex mediates electron transfer from ubiquinol to cytochrome c. Contributes to the generation of a proton gradient across the mitochondrial membrane that is then used for ATP synthesis.</text>
</comment>
<comment type="cofactor">
    <cofactor evidence="2">
        <name>heme b</name>
        <dbReference type="ChEBI" id="CHEBI:60344"/>
    </cofactor>
    <text evidence="2">Binds 2 heme b groups non-covalently.</text>
</comment>
<comment type="subunit">
    <text evidence="2">The cytochrome bc1 complex contains 11 subunits: 3 respiratory subunits (MT-CYB, CYC1 and UQCRFS1), 2 core proteins (UQCRC1 and UQCRC2) and 6 low-molecular weight proteins (UQCRH/QCR6, UQCRB/QCR7, UQCRQ/QCR8, UQCR10/QCR9, UQCR11/QCR10 and a cleavage product of UQCRFS1). This cytochrome bc1 complex then forms a dimer.</text>
</comment>
<comment type="subcellular location">
    <subcellularLocation>
        <location evidence="5">Mitochondrion inner membrane</location>
        <topology evidence="2">Multi-pass membrane protein</topology>
    </subcellularLocation>
</comment>
<comment type="miscellaneous">
    <text evidence="1">Heme 1 (or BL or b562) is low-potential and absorbs at about 562 nm, and heme 2 (or BH or b566) is high-potential and absorbs at about 566 nm.</text>
</comment>
<comment type="similarity">
    <text evidence="3 4">Belongs to the cytochrome b family.</text>
</comment>
<comment type="caution">
    <text evidence="2">The full-length protein contains only eight transmembrane helices, not nine as predicted by bioinformatics tools.</text>
</comment>
<reference key="1">
    <citation type="journal article" date="1982" name="Curr. Genet.">
        <title>Nucleotide sequence of the cytochrome B gene and adjacent regions from rat liver mitochondrial DNA.</title>
        <authorList>
            <person name="Gortz G."/>
            <person name="Feldmann H."/>
        </authorList>
    </citation>
    <scope>NUCLEOTIDE SEQUENCE [GENOMIC DNA]</scope>
    <source>
        <strain>Sprague-Dawley</strain>
    </source>
</reference>
<reference key="2">
    <citation type="journal article" date="1982" name="Gene">
        <title>Nucleotide sequence and evolution of the rat mitochondrial cytochrome b gene containing the ochre termination codon.</title>
        <authorList>
            <person name="Koike K."/>
            <person name="Kobayashi M."/>
            <person name="Yaginuma K."/>
            <person name="Taira M."/>
            <person name="Yoshida E."/>
            <person name="Imai M."/>
        </authorList>
    </citation>
    <scope>NUCLEOTIDE SEQUENCE [GENOMIC DNA]</scope>
</reference>
<reference key="3">
    <citation type="journal article" date="1989" name="J. Mol. Evol.">
        <title>The complete nucleotide sequence of the Rattus norvegicus mitochondrial genome: cryptic signals revealed by comparative analysis between vertebrates.</title>
        <authorList>
            <person name="Gadaleta G."/>
            <person name="Pepe G."/>
            <person name="de Candia G."/>
            <person name="Quagliariello C."/>
            <person name="Sbisa E."/>
            <person name="Saccone C."/>
        </authorList>
    </citation>
    <scope>NUCLEOTIDE SEQUENCE [GENOMIC DNA]</scope>
    <source>
        <strain>Wistar</strain>
    </source>
</reference>
<reference key="4">
    <citation type="journal article" date="2004" name="Nature">
        <title>Genome sequence of the Brown Norway rat yields insights into mammalian evolution.</title>
        <authorList>
            <person name="Gibbs R.A."/>
            <person name="Weinstock G.M."/>
            <person name="Metzker M.L."/>
            <person name="Muzny D.M."/>
            <person name="Sodergren E.J."/>
            <person name="Scherer S."/>
            <person name="Scott G."/>
            <person name="Steffen D."/>
            <person name="Worley K.C."/>
            <person name="Burch P.E."/>
            <person name="Okwuonu G."/>
            <person name="Hines S."/>
            <person name="Lewis L."/>
            <person name="Deramo C."/>
            <person name="Delgado O."/>
            <person name="Dugan-Rocha S."/>
            <person name="Miner G."/>
            <person name="Morgan M."/>
            <person name="Hawes A."/>
            <person name="Gill R."/>
            <person name="Holt R.A."/>
            <person name="Adams M.D."/>
            <person name="Amanatides P.G."/>
            <person name="Baden-Tillson H."/>
            <person name="Barnstead M."/>
            <person name="Chin S."/>
            <person name="Evans C.A."/>
            <person name="Ferriera S."/>
            <person name="Fosler C."/>
            <person name="Glodek A."/>
            <person name="Gu Z."/>
            <person name="Jennings D."/>
            <person name="Kraft C.L."/>
            <person name="Nguyen T."/>
            <person name="Pfannkoch C.M."/>
            <person name="Sitter C."/>
            <person name="Sutton G.G."/>
            <person name="Venter J.C."/>
            <person name="Woodage T."/>
            <person name="Smith D."/>
            <person name="Lee H.-M."/>
            <person name="Gustafson E."/>
            <person name="Cahill P."/>
            <person name="Kana A."/>
            <person name="Doucette-Stamm L."/>
            <person name="Weinstock K."/>
            <person name="Fechtel K."/>
            <person name="Weiss R.B."/>
            <person name="Dunn D.M."/>
            <person name="Green E.D."/>
            <person name="Blakesley R.W."/>
            <person name="Bouffard G.G."/>
            <person name="De Jong P.J."/>
            <person name="Osoegawa K."/>
            <person name="Zhu B."/>
            <person name="Marra M."/>
            <person name="Schein J."/>
            <person name="Bosdet I."/>
            <person name="Fjell C."/>
            <person name="Jones S."/>
            <person name="Krzywinski M."/>
            <person name="Mathewson C."/>
            <person name="Siddiqui A."/>
            <person name="Wye N."/>
            <person name="McPherson J."/>
            <person name="Zhao S."/>
            <person name="Fraser C.M."/>
            <person name="Shetty J."/>
            <person name="Shatsman S."/>
            <person name="Geer K."/>
            <person name="Chen Y."/>
            <person name="Abramzon S."/>
            <person name="Nierman W.C."/>
            <person name="Havlak P.H."/>
            <person name="Chen R."/>
            <person name="Durbin K.J."/>
            <person name="Egan A."/>
            <person name="Ren Y."/>
            <person name="Song X.-Z."/>
            <person name="Li B."/>
            <person name="Liu Y."/>
            <person name="Qin X."/>
            <person name="Cawley S."/>
            <person name="Cooney A.J."/>
            <person name="D'Souza L.M."/>
            <person name="Martin K."/>
            <person name="Wu J.Q."/>
            <person name="Gonzalez-Garay M.L."/>
            <person name="Jackson A.R."/>
            <person name="Kalafus K.J."/>
            <person name="McLeod M.P."/>
            <person name="Milosavljevic A."/>
            <person name="Virk D."/>
            <person name="Volkov A."/>
            <person name="Wheeler D.A."/>
            <person name="Zhang Z."/>
            <person name="Bailey J.A."/>
            <person name="Eichler E.E."/>
            <person name="Tuzun E."/>
            <person name="Birney E."/>
            <person name="Mongin E."/>
            <person name="Ureta-Vidal A."/>
            <person name="Woodwark C."/>
            <person name="Zdobnov E."/>
            <person name="Bork P."/>
            <person name="Suyama M."/>
            <person name="Torrents D."/>
            <person name="Alexandersson M."/>
            <person name="Trask B.J."/>
            <person name="Young J.M."/>
            <person name="Huang H."/>
            <person name="Wang H."/>
            <person name="Xing H."/>
            <person name="Daniels S."/>
            <person name="Gietzen D."/>
            <person name="Schmidt J."/>
            <person name="Stevens K."/>
            <person name="Vitt U."/>
            <person name="Wingrove J."/>
            <person name="Camara F."/>
            <person name="Mar Alba M."/>
            <person name="Abril J.F."/>
            <person name="Guigo R."/>
            <person name="Smit A."/>
            <person name="Dubchak I."/>
            <person name="Rubin E.M."/>
            <person name="Couronne O."/>
            <person name="Poliakov A."/>
            <person name="Huebner N."/>
            <person name="Ganten D."/>
            <person name="Goesele C."/>
            <person name="Hummel O."/>
            <person name="Kreitler T."/>
            <person name="Lee Y.-A."/>
            <person name="Monti J."/>
            <person name="Schulz H."/>
            <person name="Zimdahl H."/>
            <person name="Himmelbauer H."/>
            <person name="Lehrach H."/>
            <person name="Jacob H.J."/>
            <person name="Bromberg S."/>
            <person name="Gullings-Handley J."/>
            <person name="Jensen-Seaman M.I."/>
            <person name="Kwitek A.E."/>
            <person name="Lazar J."/>
            <person name="Pasko D."/>
            <person name="Tonellato P.J."/>
            <person name="Twigger S."/>
            <person name="Ponting C.P."/>
            <person name="Duarte J.M."/>
            <person name="Rice S."/>
            <person name="Goodstadt L."/>
            <person name="Beatson S.A."/>
            <person name="Emes R.D."/>
            <person name="Winter E.E."/>
            <person name="Webber C."/>
            <person name="Brandt P."/>
            <person name="Nyakatura G."/>
            <person name="Adetobi M."/>
            <person name="Chiaromonte F."/>
            <person name="Elnitski L."/>
            <person name="Eswara P."/>
            <person name="Hardison R.C."/>
            <person name="Hou M."/>
            <person name="Kolbe D."/>
            <person name="Makova K."/>
            <person name="Miller W."/>
            <person name="Nekrutenko A."/>
            <person name="Riemer C."/>
            <person name="Schwartz S."/>
            <person name="Taylor J."/>
            <person name="Yang S."/>
            <person name="Zhang Y."/>
            <person name="Lindpaintner K."/>
            <person name="Andrews T.D."/>
            <person name="Caccamo M."/>
            <person name="Clamp M."/>
            <person name="Clarke L."/>
            <person name="Curwen V."/>
            <person name="Durbin R.M."/>
            <person name="Eyras E."/>
            <person name="Searle S.M."/>
            <person name="Cooper G.M."/>
            <person name="Batzoglou S."/>
            <person name="Brudno M."/>
            <person name="Sidow A."/>
            <person name="Stone E.A."/>
            <person name="Payseur B.A."/>
            <person name="Bourque G."/>
            <person name="Lopez-Otin C."/>
            <person name="Puente X.S."/>
            <person name="Chakrabarti K."/>
            <person name="Chatterji S."/>
            <person name="Dewey C."/>
            <person name="Pachter L."/>
            <person name="Bray N."/>
            <person name="Yap V.B."/>
            <person name="Caspi A."/>
            <person name="Tesler G."/>
            <person name="Pevzner P.A."/>
            <person name="Haussler D."/>
            <person name="Roskin K.M."/>
            <person name="Baertsch R."/>
            <person name="Clawson H."/>
            <person name="Furey T.S."/>
            <person name="Hinrichs A.S."/>
            <person name="Karolchik D."/>
            <person name="Kent W.J."/>
            <person name="Rosenbloom K.R."/>
            <person name="Trumbower H."/>
            <person name="Weirauch M."/>
            <person name="Cooper D.N."/>
            <person name="Stenson P.D."/>
            <person name="Ma B."/>
            <person name="Brent M."/>
            <person name="Arumugam M."/>
            <person name="Shteynberg D."/>
            <person name="Copley R.R."/>
            <person name="Taylor M.S."/>
            <person name="Riethman H."/>
            <person name="Mudunuri U."/>
            <person name="Peterson J."/>
            <person name="Guyer M."/>
            <person name="Felsenfeld A."/>
            <person name="Old S."/>
            <person name="Mockrin S."/>
            <person name="Collins F.S."/>
        </authorList>
    </citation>
    <scope>NUCLEOTIDE SEQUENCE [LARGE SCALE GENOMIC DNA]</scope>
    <source>
        <strain>Brown Norway</strain>
    </source>
</reference>
<reference key="5">
    <citation type="journal article" date="1984" name="Proc. Natl. Acad. Sci. U.S.A.">
        <title>Relationship between lateral diffusion, collision frequency, and electron transfer of mitochondrial inner membrane oxidation-reduction components.</title>
        <authorList>
            <person name="Gupte S."/>
            <person name="Wu E.S."/>
            <person name="Hoechli L."/>
            <person name="Hoechli M."/>
            <person name="Jacobson K."/>
            <person name="Sowers A.E."/>
            <person name="Hackenbrock C.R."/>
        </authorList>
    </citation>
    <scope>SUBCELLULAR LOCATION</scope>
</reference>
<name>CYB_RAT</name>
<sequence>MTNIRKSHPLFKIINHSFIDLPAPSNISSWWNFGSLLGVCLMVQILTGLFLAMHYTSDTMTAFSSVTHICRDVNYGWLIRYLHANGASMFFICLFLHVGRGLYYGSYTFLETWNIGIILLFAVMATAFMGYVLPWGQMSFWGATVITNLLSAIPYIGTTLVEWIWGGFSVDKATLTRFFAFHFILPFIIAALAIVHLLFLHETGSNNPTGLNSDADKIPFHPYYTIKDLLGVFMLLLFLMTLVLFFPDLLGDPDNYTPANPLNTPPHIKPEWYFLFAYAILRSIPNKLGGVVALILSILILAFLPFLHTSKQRSLTFRPITQILYWILVANLLILTWIGGQPVEHPFIIIGQLASISYFSIILILMPISGIVEDKMLKWN</sequence>
<organism>
    <name type="scientific">Rattus norvegicus</name>
    <name type="common">Rat</name>
    <dbReference type="NCBI Taxonomy" id="10116"/>
    <lineage>
        <taxon>Eukaryota</taxon>
        <taxon>Metazoa</taxon>
        <taxon>Chordata</taxon>
        <taxon>Craniata</taxon>
        <taxon>Vertebrata</taxon>
        <taxon>Euteleostomi</taxon>
        <taxon>Mammalia</taxon>
        <taxon>Eutheria</taxon>
        <taxon>Euarchontoglires</taxon>
        <taxon>Glires</taxon>
        <taxon>Rodentia</taxon>
        <taxon>Myomorpha</taxon>
        <taxon>Muroidea</taxon>
        <taxon>Muridae</taxon>
        <taxon>Murinae</taxon>
        <taxon>Rattus</taxon>
    </lineage>
</organism>
<feature type="chain" id="PRO_0000061491" description="Cytochrome b">
    <location>
        <begin position="1"/>
        <end position="380"/>
    </location>
</feature>
<feature type="transmembrane region" description="Helical" evidence="2">
    <location>
        <begin position="33"/>
        <end position="53"/>
    </location>
</feature>
<feature type="transmembrane region" description="Helical" evidence="2">
    <location>
        <begin position="77"/>
        <end position="98"/>
    </location>
</feature>
<feature type="transmembrane region" description="Helical" evidence="2">
    <location>
        <begin position="113"/>
        <end position="133"/>
    </location>
</feature>
<feature type="transmembrane region" description="Helical" evidence="2">
    <location>
        <begin position="178"/>
        <end position="198"/>
    </location>
</feature>
<feature type="transmembrane region" description="Helical" evidence="2">
    <location>
        <begin position="226"/>
        <end position="246"/>
    </location>
</feature>
<feature type="transmembrane region" description="Helical" evidence="2">
    <location>
        <begin position="288"/>
        <end position="308"/>
    </location>
</feature>
<feature type="transmembrane region" description="Helical" evidence="2">
    <location>
        <begin position="320"/>
        <end position="340"/>
    </location>
</feature>
<feature type="transmembrane region" description="Helical" evidence="2">
    <location>
        <begin position="347"/>
        <end position="367"/>
    </location>
</feature>
<feature type="binding site" description="axial binding residue" evidence="4">
    <location>
        <position position="83"/>
    </location>
    <ligand>
        <name>heme b</name>
        <dbReference type="ChEBI" id="CHEBI:60344"/>
        <label>b562</label>
    </ligand>
    <ligandPart>
        <name>Fe</name>
        <dbReference type="ChEBI" id="CHEBI:18248"/>
    </ligandPart>
</feature>
<feature type="binding site" description="axial binding residue" evidence="2">
    <location>
        <position position="97"/>
    </location>
    <ligand>
        <name>heme b</name>
        <dbReference type="ChEBI" id="CHEBI:60344"/>
        <label>b566</label>
    </ligand>
    <ligandPart>
        <name>Fe</name>
        <dbReference type="ChEBI" id="CHEBI:18248"/>
    </ligandPart>
</feature>
<feature type="binding site" description="axial binding residue" evidence="2">
    <location>
        <position position="182"/>
    </location>
    <ligand>
        <name>heme b</name>
        <dbReference type="ChEBI" id="CHEBI:60344"/>
        <label>b562</label>
    </ligand>
    <ligandPart>
        <name>Fe</name>
        <dbReference type="ChEBI" id="CHEBI:18248"/>
    </ligandPart>
</feature>
<feature type="binding site" description="axial binding residue" evidence="2">
    <location>
        <position position="196"/>
    </location>
    <ligand>
        <name>heme b</name>
        <dbReference type="ChEBI" id="CHEBI:60344"/>
        <label>b566</label>
    </ligand>
    <ligandPart>
        <name>Fe</name>
        <dbReference type="ChEBI" id="CHEBI:18248"/>
    </ligandPart>
</feature>
<feature type="binding site" evidence="2">
    <location>
        <position position="201"/>
    </location>
    <ligand>
        <name>a ubiquinone</name>
        <dbReference type="ChEBI" id="CHEBI:16389"/>
    </ligand>
</feature>
<feature type="sequence conflict" description="In Ref. 3; CAA32966." evidence="6" ref="3">
    <original>H</original>
    <variation>Q</variation>
    <location>
        <position position="83"/>
    </location>
</feature>
<feature type="sequence conflict" description="In Ref. 2; AAA99907." evidence="6" ref="2">
    <original>I</original>
    <variation>T</variation>
    <location>
        <position position="153"/>
    </location>
</feature>
<feature type="sequence conflict" description="In Ref. 1; CAA24882." evidence="6" ref="1">
    <original>I</original>
    <variation>L</variation>
    <location>
        <position position="164"/>
    </location>
</feature>
<feature type="sequence conflict" description="In Ref. 1; CAA24882, 2; AAA99907 and 3; CAA32966." evidence="6" ref="1 2 3">
    <original>I</original>
    <variation>V</variation>
    <location>
        <position position="334"/>
    </location>
</feature>
<gene>
    <name evidence="7" type="primary">Mt-cyb</name>
    <name type="synonym">Cob</name>
    <name type="synonym">Cytb</name>
    <name type="synonym">Mtcyb</name>
</gene>
<proteinExistence type="inferred from homology"/>
<dbReference type="EMBL" id="V01556">
    <property type="protein sequence ID" value="CAA24882.1"/>
    <property type="molecule type" value="Genomic_DNA"/>
</dbReference>
<dbReference type="EMBL" id="J01436">
    <property type="protein sequence ID" value="AAA99907.1"/>
    <property type="molecule type" value="Genomic_DNA"/>
</dbReference>
<dbReference type="EMBL" id="X14848">
    <property type="protein sequence ID" value="CAA32966.1"/>
    <property type="molecule type" value="Genomic_DNA"/>
</dbReference>
<dbReference type="EMBL" id="AY172581">
    <property type="protein sequence ID" value="AAN77606.1"/>
    <property type="molecule type" value="Genomic_DNA"/>
</dbReference>
<dbReference type="PIR" id="A00154">
    <property type="entry name" value="CBRT"/>
</dbReference>
<dbReference type="RefSeq" id="AP_004904.1">
    <property type="nucleotide sequence ID" value="AC_000022.2"/>
</dbReference>
<dbReference type="RefSeq" id="YP_665641.1">
    <property type="nucleotide sequence ID" value="NC_001665.2"/>
</dbReference>
<dbReference type="SMR" id="P00159"/>
<dbReference type="CORUM" id="P00159"/>
<dbReference type="FunCoup" id="P00159">
    <property type="interactions" value="158"/>
</dbReference>
<dbReference type="STRING" id="10116.ENSRNOP00000047954"/>
<dbReference type="iPTMnet" id="P00159"/>
<dbReference type="PhosphoSitePlus" id="P00159"/>
<dbReference type="PaxDb" id="10116-ENSRNOP00000047954"/>
<dbReference type="Ensembl" id="ENSRNOT00000042098.3">
    <property type="protein sequence ID" value="ENSRNOP00000047954.3"/>
    <property type="gene ID" value="ENSRNOG00000031766.3"/>
</dbReference>
<dbReference type="GeneID" id="26192"/>
<dbReference type="KEGG" id="rno:26192"/>
<dbReference type="AGR" id="RGD:620081"/>
<dbReference type="CTD" id="4519"/>
<dbReference type="RGD" id="620081">
    <property type="gene designation" value="Mt-cyb"/>
</dbReference>
<dbReference type="eggNOG" id="KOG4663">
    <property type="taxonomic scope" value="Eukaryota"/>
</dbReference>
<dbReference type="GeneTree" id="ENSGT00390000017948"/>
<dbReference type="HOGENOM" id="CLU_031114_3_0_1"/>
<dbReference type="InParanoid" id="P00159"/>
<dbReference type="OMA" id="NISAWWN"/>
<dbReference type="OrthoDB" id="26440at9989"/>
<dbReference type="Reactome" id="R-RNO-611105">
    <property type="pathway name" value="Respiratory electron transport"/>
</dbReference>
<dbReference type="Reactome" id="R-RNO-9865881">
    <property type="pathway name" value="Complex III assembly"/>
</dbReference>
<dbReference type="PRO" id="PR:P00159"/>
<dbReference type="Proteomes" id="UP000002494">
    <property type="component" value="Mitochondrion"/>
</dbReference>
<dbReference type="Bgee" id="ENSRNOG00000031766">
    <property type="expression patterns" value="Expressed in heart and 18 other cell types or tissues"/>
</dbReference>
<dbReference type="ExpressionAtlas" id="P00159">
    <property type="expression patterns" value="baseline and differential"/>
</dbReference>
<dbReference type="GO" id="GO:0016020">
    <property type="term" value="C:membrane"/>
    <property type="evidence" value="ECO:0000266"/>
    <property type="project" value="RGD"/>
</dbReference>
<dbReference type="GO" id="GO:0005743">
    <property type="term" value="C:mitochondrial inner membrane"/>
    <property type="evidence" value="ECO:0000314"/>
    <property type="project" value="UniProtKB"/>
</dbReference>
<dbReference type="GO" id="GO:0005739">
    <property type="term" value="C:mitochondrion"/>
    <property type="evidence" value="ECO:0000266"/>
    <property type="project" value="RGD"/>
</dbReference>
<dbReference type="GO" id="GO:0032991">
    <property type="term" value="C:protein-containing complex"/>
    <property type="evidence" value="ECO:0000314"/>
    <property type="project" value="RGD"/>
</dbReference>
<dbReference type="GO" id="GO:0045275">
    <property type="term" value="C:respiratory chain complex III"/>
    <property type="evidence" value="ECO:0000266"/>
    <property type="project" value="RGD"/>
</dbReference>
<dbReference type="GO" id="GO:0046872">
    <property type="term" value="F:metal ion binding"/>
    <property type="evidence" value="ECO:0007669"/>
    <property type="project" value="UniProtKB-KW"/>
</dbReference>
<dbReference type="GO" id="GO:0044877">
    <property type="term" value="F:protein-containing complex binding"/>
    <property type="evidence" value="ECO:0000353"/>
    <property type="project" value="RGD"/>
</dbReference>
<dbReference type="GO" id="GO:0008121">
    <property type="term" value="F:ubiquinol-cytochrome-c reductase activity"/>
    <property type="evidence" value="ECO:0000266"/>
    <property type="project" value="RGD"/>
</dbReference>
<dbReference type="GO" id="GO:0031100">
    <property type="term" value="P:animal organ regeneration"/>
    <property type="evidence" value="ECO:0000270"/>
    <property type="project" value="RGD"/>
</dbReference>
<dbReference type="GO" id="GO:0015990">
    <property type="term" value="P:electron transport coupled proton transport"/>
    <property type="evidence" value="ECO:0000315"/>
    <property type="project" value="RGD"/>
</dbReference>
<dbReference type="GO" id="GO:0006122">
    <property type="term" value="P:mitochondrial electron transport, ubiquinol to cytochrome c"/>
    <property type="evidence" value="ECO:0000266"/>
    <property type="project" value="RGD"/>
</dbReference>
<dbReference type="GO" id="GO:0046686">
    <property type="term" value="P:response to cadmium ion"/>
    <property type="evidence" value="ECO:0000314"/>
    <property type="project" value="RGD"/>
</dbReference>
<dbReference type="GO" id="GO:0051592">
    <property type="term" value="P:response to calcium ion"/>
    <property type="evidence" value="ECO:0000314"/>
    <property type="project" value="RGD"/>
</dbReference>
<dbReference type="GO" id="GO:0033590">
    <property type="term" value="P:response to cobalamin"/>
    <property type="evidence" value="ECO:0000270"/>
    <property type="project" value="RGD"/>
</dbReference>
<dbReference type="GO" id="GO:0046688">
    <property type="term" value="P:response to copper ion"/>
    <property type="evidence" value="ECO:0000270"/>
    <property type="project" value="RGD"/>
</dbReference>
<dbReference type="GO" id="GO:1904421">
    <property type="term" value="P:response to D-galactosamine"/>
    <property type="evidence" value="ECO:0000270"/>
    <property type="project" value="RGD"/>
</dbReference>
<dbReference type="GO" id="GO:0045471">
    <property type="term" value="P:response to ethanol"/>
    <property type="evidence" value="ECO:0000270"/>
    <property type="project" value="RGD"/>
</dbReference>
<dbReference type="GO" id="GO:0033762">
    <property type="term" value="P:response to glucagon"/>
    <property type="evidence" value="ECO:0000314"/>
    <property type="project" value="RGD"/>
</dbReference>
<dbReference type="GO" id="GO:0009725">
    <property type="term" value="P:response to hormone"/>
    <property type="evidence" value="ECO:0000270"/>
    <property type="project" value="RGD"/>
</dbReference>
<dbReference type="GO" id="GO:0055093">
    <property type="term" value="P:response to hyperoxia"/>
    <property type="evidence" value="ECO:0000270"/>
    <property type="project" value="RGD"/>
</dbReference>
<dbReference type="GO" id="GO:0001666">
    <property type="term" value="P:response to hypoxia"/>
    <property type="evidence" value="ECO:0000270"/>
    <property type="project" value="RGD"/>
</dbReference>
<dbReference type="GO" id="GO:0046689">
    <property type="term" value="P:response to mercury ion"/>
    <property type="evidence" value="ECO:0000315"/>
    <property type="project" value="RGD"/>
</dbReference>
<dbReference type="GO" id="GO:0007584">
    <property type="term" value="P:response to nutrient"/>
    <property type="evidence" value="ECO:0000270"/>
    <property type="project" value="RGD"/>
</dbReference>
<dbReference type="GO" id="GO:0009636">
    <property type="term" value="P:response to toxic substance"/>
    <property type="evidence" value="ECO:0000270"/>
    <property type="project" value="RGD"/>
</dbReference>
<dbReference type="GO" id="GO:0009410">
    <property type="term" value="P:response to xenobiotic stimulus"/>
    <property type="evidence" value="ECO:0000270"/>
    <property type="project" value="RGD"/>
</dbReference>
<dbReference type="CDD" id="cd00290">
    <property type="entry name" value="cytochrome_b_C"/>
    <property type="match status" value="1"/>
</dbReference>
<dbReference type="CDD" id="cd00284">
    <property type="entry name" value="Cytochrome_b_N"/>
    <property type="match status" value="1"/>
</dbReference>
<dbReference type="FunFam" id="1.20.810.10:FF:000002">
    <property type="entry name" value="Cytochrome b"/>
    <property type="match status" value="1"/>
</dbReference>
<dbReference type="Gene3D" id="1.20.810.10">
    <property type="entry name" value="Cytochrome Bc1 Complex, Chain C"/>
    <property type="match status" value="1"/>
</dbReference>
<dbReference type="InterPro" id="IPR005798">
    <property type="entry name" value="Cyt_b/b6_C"/>
</dbReference>
<dbReference type="InterPro" id="IPR036150">
    <property type="entry name" value="Cyt_b/b6_C_sf"/>
</dbReference>
<dbReference type="InterPro" id="IPR005797">
    <property type="entry name" value="Cyt_b/b6_N"/>
</dbReference>
<dbReference type="InterPro" id="IPR027387">
    <property type="entry name" value="Cytb/b6-like_sf"/>
</dbReference>
<dbReference type="InterPro" id="IPR030689">
    <property type="entry name" value="Cytochrome_b"/>
</dbReference>
<dbReference type="InterPro" id="IPR048260">
    <property type="entry name" value="Cytochrome_b_C_euk/bac"/>
</dbReference>
<dbReference type="InterPro" id="IPR048259">
    <property type="entry name" value="Cytochrome_b_N_euk/bac"/>
</dbReference>
<dbReference type="InterPro" id="IPR016174">
    <property type="entry name" value="Di-haem_cyt_TM"/>
</dbReference>
<dbReference type="PANTHER" id="PTHR19271">
    <property type="entry name" value="CYTOCHROME B"/>
    <property type="match status" value="1"/>
</dbReference>
<dbReference type="PANTHER" id="PTHR19271:SF16">
    <property type="entry name" value="CYTOCHROME B"/>
    <property type="match status" value="1"/>
</dbReference>
<dbReference type="Pfam" id="PF00032">
    <property type="entry name" value="Cytochrom_B_C"/>
    <property type="match status" value="1"/>
</dbReference>
<dbReference type="Pfam" id="PF00033">
    <property type="entry name" value="Cytochrome_B"/>
    <property type="match status" value="1"/>
</dbReference>
<dbReference type="PIRSF" id="PIRSF038885">
    <property type="entry name" value="COB"/>
    <property type="match status" value="1"/>
</dbReference>
<dbReference type="SUPFAM" id="SSF81648">
    <property type="entry name" value="a domain/subunit of cytochrome bc1 complex (Ubiquinol-cytochrome c reductase)"/>
    <property type="match status" value="1"/>
</dbReference>
<dbReference type="SUPFAM" id="SSF81342">
    <property type="entry name" value="Transmembrane di-heme cytochromes"/>
    <property type="match status" value="1"/>
</dbReference>
<dbReference type="PROSITE" id="PS51003">
    <property type="entry name" value="CYTB_CTER"/>
    <property type="match status" value="1"/>
</dbReference>
<dbReference type="PROSITE" id="PS51002">
    <property type="entry name" value="CYTB_NTER"/>
    <property type="match status" value="1"/>
</dbReference>
<evidence type="ECO:0000250" key="1"/>
<evidence type="ECO:0000250" key="2">
    <source>
        <dbReference type="UniProtKB" id="P00157"/>
    </source>
</evidence>
<evidence type="ECO:0000255" key="3">
    <source>
        <dbReference type="PROSITE-ProRule" id="PRU00967"/>
    </source>
</evidence>
<evidence type="ECO:0000255" key="4">
    <source>
        <dbReference type="PROSITE-ProRule" id="PRU00968"/>
    </source>
</evidence>
<evidence type="ECO:0000269" key="5">
    <source>
    </source>
</evidence>
<evidence type="ECO:0000305" key="6"/>
<evidence type="ECO:0000312" key="7">
    <source>
        <dbReference type="RGD" id="620081"/>
    </source>
</evidence>
<geneLocation type="mitochondrion"/>
<accession>P00159</accession>
<protein>
    <recommendedName>
        <fullName>Cytochrome b</fullName>
    </recommendedName>
    <alternativeName>
        <fullName>Complex III subunit 3</fullName>
    </alternativeName>
    <alternativeName>
        <fullName>Complex III subunit III</fullName>
    </alternativeName>
    <alternativeName>
        <fullName>Cytochrome b-c1 complex subunit 3</fullName>
    </alternativeName>
    <alternativeName>
        <fullName>Ubiquinol-cytochrome-c reductase complex cytochrome b subunit</fullName>
    </alternativeName>
</protein>